<feature type="chain" id="PRO_0000358359" description="NADH-quinone oxidoreductase subunit B">
    <location>
        <begin position="1"/>
        <end position="193"/>
    </location>
</feature>
<feature type="region of interest" description="Disordered" evidence="3">
    <location>
        <begin position="1"/>
        <end position="23"/>
    </location>
</feature>
<feature type="compositionally biased region" description="Polar residues" evidence="3">
    <location>
        <begin position="1"/>
        <end position="11"/>
    </location>
</feature>
<feature type="binding site" evidence="2">
    <location>
        <position position="72"/>
    </location>
    <ligand>
        <name>[4Fe-4S] cluster</name>
        <dbReference type="ChEBI" id="CHEBI:49883"/>
    </ligand>
</feature>
<feature type="binding site" evidence="2">
    <location>
        <position position="73"/>
    </location>
    <ligand>
        <name>[4Fe-4S] cluster</name>
        <dbReference type="ChEBI" id="CHEBI:49883"/>
    </ligand>
</feature>
<feature type="binding site" evidence="2">
    <location>
        <position position="137"/>
    </location>
    <ligand>
        <name>[4Fe-4S] cluster</name>
        <dbReference type="ChEBI" id="CHEBI:49883"/>
    </ligand>
</feature>
<feature type="binding site" evidence="2">
    <location>
        <position position="167"/>
    </location>
    <ligand>
        <name>[4Fe-4S] cluster</name>
        <dbReference type="ChEBI" id="CHEBI:49883"/>
    </ligand>
</feature>
<sequence>MGLTGTNTTLVAPQPKGILDPRTGKPVGSDDAFFNDLNGELSDKGFIVTSADALITWARTGSLMWMTFGLACCAVEMMHISMPRYDAERFGIAPRASPRQSDVMIVAGTLTNKMAPALRKVYDQMPEPRYVISMGSCANGGGYYHYSYSVVRGCDRVVPVDIYVPGCPPTAEALLYGILLLQKKIRRTGTIER</sequence>
<accession>Q8YGK1</accession>
<dbReference type="EC" id="7.1.1.-" evidence="2"/>
<dbReference type="EMBL" id="AE008917">
    <property type="protein sequence ID" value="AAL52338.1"/>
    <property type="status" value="ALT_INIT"/>
    <property type="molecule type" value="Genomic_DNA"/>
</dbReference>
<dbReference type="PIR" id="AG3396">
    <property type="entry name" value="AG3396"/>
</dbReference>
<dbReference type="RefSeq" id="WP_002967573.1">
    <property type="nucleotide sequence ID" value="NZ_GG703778.1"/>
</dbReference>
<dbReference type="SMR" id="Q8YGK1"/>
<dbReference type="KEGG" id="bme:BMEI1157"/>
<dbReference type="KEGG" id="bmel:DK63_256"/>
<dbReference type="PATRIC" id="fig|224914.52.peg.265"/>
<dbReference type="eggNOG" id="COG0377">
    <property type="taxonomic scope" value="Bacteria"/>
</dbReference>
<dbReference type="PhylomeDB" id="Q8YGK1"/>
<dbReference type="Proteomes" id="UP000000419">
    <property type="component" value="Chromosome I"/>
</dbReference>
<dbReference type="GO" id="GO:0005886">
    <property type="term" value="C:plasma membrane"/>
    <property type="evidence" value="ECO:0007669"/>
    <property type="project" value="UniProtKB-SubCell"/>
</dbReference>
<dbReference type="GO" id="GO:0045271">
    <property type="term" value="C:respiratory chain complex I"/>
    <property type="evidence" value="ECO:0007669"/>
    <property type="project" value="TreeGrafter"/>
</dbReference>
<dbReference type="GO" id="GO:0051539">
    <property type="term" value="F:4 iron, 4 sulfur cluster binding"/>
    <property type="evidence" value="ECO:0007669"/>
    <property type="project" value="UniProtKB-KW"/>
</dbReference>
<dbReference type="GO" id="GO:0005506">
    <property type="term" value="F:iron ion binding"/>
    <property type="evidence" value="ECO:0007669"/>
    <property type="project" value="UniProtKB-UniRule"/>
</dbReference>
<dbReference type="GO" id="GO:0008137">
    <property type="term" value="F:NADH dehydrogenase (ubiquinone) activity"/>
    <property type="evidence" value="ECO:0007669"/>
    <property type="project" value="InterPro"/>
</dbReference>
<dbReference type="GO" id="GO:0050136">
    <property type="term" value="F:NADH:ubiquinone reductase (non-electrogenic) activity"/>
    <property type="evidence" value="ECO:0007669"/>
    <property type="project" value="UniProtKB-UniRule"/>
</dbReference>
<dbReference type="GO" id="GO:0048038">
    <property type="term" value="F:quinone binding"/>
    <property type="evidence" value="ECO:0007669"/>
    <property type="project" value="UniProtKB-KW"/>
</dbReference>
<dbReference type="GO" id="GO:0009060">
    <property type="term" value="P:aerobic respiration"/>
    <property type="evidence" value="ECO:0007669"/>
    <property type="project" value="TreeGrafter"/>
</dbReference>
<dbReference type="GO" id="GO:0015990">
    <property type="term" value="P:electron transport coupled proton transport"/>
    <property type="evidence" value="ECO:0007669"/>
    <property type="project" value="TreeGrafter"/>
</dbReference>
<dbReference type="FunFam" id="3.40.50.12280:FF:000001">
    <property type="entry name" value="NADH-quinone oxidoreductase subunit B 2"/>
    <property type="match status" value="1"/>
</dbReference>
<dbReference type="Gene3D" id="3.40.50.12280">
    <property type="match status" value="1"/>
</dbReference>
<dbReference type="HAMAP" id="MF_01356">
    <property type="entry name" value="NDH1_NuoB"/>
    <property type="match status" value="1"/>
</dbReference>
<dbReference type="InterPro" id="IPR006137">
    <property type="entry name" value="NADH_UbQ_OxRdtase-like_20kDa"/>
</dbReference>
<dbReference type="InterPro" id="IPR006138">
    <property type="entry name" value="NADH_UQ_OxRdtase_20Kd_su"/>
</dbReference>
<dbReference type="NCBIfam" id="TIGR01957">
    <property type="entry name" value="nuoB_fam"/>
    <property type="match status" value="1"/>
</dbReference>
<dbReference type="NCBIfam" id="NF005012">
    <property type="entry name" value="PRK06411.1"/>
    <property type="match status" value="1"/>
</dbReference>
<dbReference type="PANTHER" id="PTHR11995">
    <property type="entry name" value="NADH DEHYDROGENASE"/>
    <property type="match status" value="1"/>
</dbReference>
<dbReference type="PANTHER" id="PTHR11995:SF14">
    <property type="entry name" value="NADH DEHYDROGENASE [UBIQUINONE] IRON-SULFUR PROTEIN 7, MITOCHONDRIAL"/>
    <property type="match status" value="1"/>
</dbReference>
<dbReference type="Pfam" id="PF01058">
    <property type="entry name" value="Oxidored_q6"/>
    <property type="match status" value="1"/>
</dbReference>
<dbReference type="SUPFAM" id="SSF56770">
    <property type="entry name" value="HydA/Nqo6-like"/>
    <property type="match status" value="1"/>
</dbReference>
<dbReference type="PROSITE" id="PS01150">
    <property type="entry name" value="COMPLEX1_20K"/>
    <property type="match status" value="1"/>
</dbReference>
<organism>
    <name type="scientific">Brucella melitensis biotype 1 (strain ATCC 23456 / CCUG 17765 / NCTC 10094 / 16M)</name>
    <dbReference type="NCBI Taxonomy" id="224914"/>
    <lineage>
        <taxon>Bacteria</taxon>
        <taxon>Pseudomonadati</taxon>
        <taxon>Pseudomonadota</taxon>
        <taxon>Alphaproteobacteria</taxon>
        <taxon>Hyphomicrobiales</taxon>
        <taxon>Brucellaceae</taxon>
        <taxon>Brucella/Ochrobactrum group</taxon>
        <taxon>Brucella</taxon>
    </lineage>
</organism>
<name>NUOB_BRUME</name>
<proteinExistence type="inferred from homology"/>
<keyword id="KW-0004">4Fe-4S</keyword>
<keyword id="KW-0997">Cell inner membrane</keyword>
<keyword id="KW-1003">Cell membrane</keyword>
<keyword id="KW-0408">Iron</keyword>
<keyword id="KW-0411">Iron-sulfur</keyword>
<keyword id="KW-0472">Membrane</keyword>
<keyword id="KW-0479">Metal-binding</keyword>
<keyword id="KW-0520">NAD</keyword>
<keyword id="KW-0874">Quinone</keyword>
<keyword id="KW-1278">Translocase</keyword>
<keyword id="KW-0813">Transport</keyword>
<keyword id="KW-0830">Ubiquinone</keyword>
<comment type="function">
    <text evidence="1">NDH-1 shuttles electrons from NADH, via FMN and iron-sulfur (Fe-S) centers, to quinones in the respiratory chain. Couples the redox reaction to proton translocation (for every two electrons transferred, four hydrogen ions are translocated across the cytoplasmic membrane), and thus conserves the redox energy in a proton gradient (By similarity).</text>
</comment>
<comment type="catalytic activity">
    <reaction evidence="2">
        <text>a quinone + NADH + 5 H(+)(in) = a quinol + NAD(+) + 4 H(+)(out)</text>
        <dbReference type="Rhea" id="RHEA:57888"/>
        <dbReference type="ChEBI" id="CHEBI:15378"/>
        <dbReference type="ChEBI" id="CHEBI:24646"/>
        <dbReference type="ChEBI" id="CHEBI:57540"/>
        <dbReference type="ChEBI" id="CHEBI:57945"/>
        <dbReference type="ChEBI" id="CHEBI:132124"/>
    </reaction>
</comment>
<comment type="cofactor">
    <cofactor evidence="2">
        <name>[4Fe-4S] cluster</name>
        <dbReference type="ChEBI" id="CHEBI:49883"/>
    </cofactor>
    <text evidence="2">Binds 1 [4Fe-4S] cluster.</text>
</comment>
<comment type="subunit">
    <text evidence="2">NDH-1 is composed of 14 different subunits. Subunits NuoB, C, D, E, F, and G constitute the peripheral sector of the complex.</text>
</comment>
<comment type="subcellular location">
    <subcellularLocation>
        <location evidence="2">Cell inner membrane</location>
        <topology evidence="2">Peripheral membrane protein</topology>
        <orientation evidence="2">Cytoplasmic side</orientation>
    </subcellularLocation>
</comment>
<comment type="similarity">
    <text evidence="2">Belongs to the complex I 20 kDa subunit family.</text>
</comment>
<comment type="sequence caution" evidence="4">
    <conflict type="erroneous initiation">
        <sequence resource="EMBL-CDS" id="AAL52338"/>
    </conflict>
</comment>
<evidence type="ECO:0000250" key="1"/>
<evidence type="ECO:0000255" key="2">
    <source>
        <dbReference type="HAMAP-Rule" id="MF_01356"/>
    </source>
</evidence>
<evidence type="ECO:0000256" key="3">
    <source>
        <dbReference type="SAM" id="MobiDB-lite"/>
    </source>
</evidence>
<evidence type="ECO:0000305" key="4"/>
<protein>
    <recommendedName>
        <fullName evidence="2">NADH-quinone oxidoreductase subunit B</fullName>
        <ecNumber evidence="2">7.1.1.-</ecNumber>
    </recommendedName>
    <alternativeName>
        <fullName evidence="2">NADH dehydrogenase I subunit B</fullName>
    </alternativeName>
    <alternativeName>
        <fullName evidence="2">NDH-1 subunit B</fullName>
    </alternativeName>
</protein>
<gene>
    <name evidence="2" type="primary">nuoB</name>
    <name type="ordered locus">BMEI1157</name>
</gene>
<reference key="1">
    <citation type="journal article" date="2002" name="Proc. Natl. Acad. Sci. U.S.A.">
        <title>The genome sequence of the facultative intracellular pathogen Brucella melitensis.</title>
        <authorList>
            <person name="DelVecchio V.G."/>
            <person name="Kapatral V."/>
            <person name="Redkar R.J."/>
            <person name="Patra G."/>
            <person name="Mujer C."/>
            <person name="Los T."/>
            <person name="Ivanova N."/>
            <person name="Anderson I."/>
            <person name="Bhattacharyya A."/>
            <person name="Lykidis A."/>
            <person name="Reznik G."/>
            <person name="Jablonski L."/>
            <person name="Larsen N."/>
            <person name="D'Souza M."/>
            <person name="Bernal A."/>
            <person name="Mazur M."/>
            <person name="Goltsman E."/>
            <person name="Selkov E."/>
            <person name="Elzer P.H."/>
            <person name="Hagius S."/>
            <person name="O'Callaghan D."/>
            <person name="Letesson J.-J."/>
            <person name="Haselkorn R."/>
            <person name="Kyrpides N.C."/>
            <person name="Overbeek R."/>
        </authorList>
    </citation>
    <scope>NUCLEOTIDE SEQUENCE [LARGE SCALE GENOMIC DNA]</scope>
    <source>
        <strain>ATCC 23456 / CCUG 17765 / NCTC 10094 / 16M</strain>
    </source>
</reference>